<organism>
    <name type="scientific">Tropheryma whipplei (strain TW08/27)</name>
    <name type="common">Whipple's bacillus</name>
    <dbReference type="NCBI Taxonomy" id="218496"/>
    <lineage>
        <taxon>Bacteria</taxon>
        <taxon>Bacillati</taxon>
        <taxon>Actinomycetota</taxon>
        <taxon>Actinomycetes</taxon>
        <taxon>Micrococcales</taxon>
        <taxon>Tropherymataceae</taxon>
        <taxon>Tropheryma</taxon>
    </lineage>
</organism>
<gene>
    <name evidence="1" type="primary">tatA</name>
    <name type="ordered locus">TW452</name>
</gene>
<name>TATA_TROW8</name>
<proteinExistence type="inferred from homology"/>
<reference key="1">
    <citation type="journal article" date="2003" name="Lancet">
        <title>Sequencing and analysis of the genome of the Whipple's disease bacterium Tropheryma whipplei.</title>
        <authorList>
            <person name="Bentley S.D."/>
            <person name="Maiwald M."/>
            <person name="Murphy L.D."/>
            <person name="Pallen M.J."/>
            <person name="Yeats C.A."/>
            <person name="Dover L.G."/>
            <person name="Norbertczak H.T."/>
            <person name="Besra G.S."/>
            <person name="Quail M.A."/>
            <person name="Harris D.E."/>
            <person name="von Herbay A."/>
            <person name="Goble A."/>
            <person name="Rutter S."/>
            <person name="Squares R."/>
            <person name="Squares S."/>
            <person name="Barrell B.G."/>
            <person name="Parkhill J."/>
            <person name="Relman D.A."/>
        </authorList>
    </citation>
    <scope>NUCLEOTIDE SEQUENCE [LARGE SCALE GENOMIC DNA]</scope>
    <source>
        <strain>TW08/27</strain>
    </source>
</reference>
<dbReference type="EMBL" id="BX251411">
    <property type="protein sequence ID" value="CAD67120.1"/>
    <property type="molecule type" value="Genomic_DNA"/>
</dbReference>
<dbReference type="RefSeq" id="WP_011096400.1">
    <property type="nucleotide sequence ID" value="NC_004551.1"/>
</dbReference>
<dbReference type="SMR" id="Q83NJ2"/>
<dbReference type="GeneID" id="67388228"/>
<dbReference type="KEGG" id="tws:TW452"/>
<dbReference type="HOGENOM" id="CLU_086034_4_4_11"/>
<dbReference type="GO" id="GO:0033281">
    <property type="term" value="C:TAT protein transport complex"/>
    <property type="evidence" value="ECO:0007669"/>
    <property type="project" value="UniProtKB-UniRule"/>
</dbReference>
<dbReference type="GO" id="GO:0008320">
    <property type="term" value="F:protein transmembrane transporter activity"/>
    <property type="evidence" value="ECO:0007669"/>
    <property type="project" value="UniProtKB-UniRule"/>
</dbReference>
<dbReference type="GO" id="GO:0043953">
    <property type="term" value="P:protein transport by the Tat complex"/>
    <property type="evidence" value="ECO:0007669"/>
    <property type="project" value="UniProtKB-UniRule"/>
</dbReference>
<dbReference type="Gene3D" id="1.20.5.3310">
    <property type="match status" value="1"/>
</dbReference>
<dbReference type="HAMAP" id="MF_00236">
    <property type="entry name" value="TatA_E"/>
    <property type="match status" value="1"/>
</dbReference>
<dbReference type="InterPro" id="IPR003369">
    <property type="entry name" value="TatA/B/E"/>
</dbReference>
<dbReference type="InterPro" id="IPR006312">
    <property type="entry name" value="TatA/E"/>
</dbReference>
<dbReference type="NCBIfam" id="TIGR01411">
    <property type="entry name" value="tatAE"/>
    <property type="match status" value="1"/>
</dbReference>
<dbReference type="PANTHER" id="PTHR42982">
    <property type="entry name" value="SEC-INDEPENDENT PROTEIN TRANSLOCASE PROTEIN TATA"/>
    <property type="match status" value="1"/>
</dbReference>
<dbReference type="PANTHER" id="PTHR42982:SF1">
    <property type="entry name" value="SEC-INDEPENDENT PROTEIN TRANSLOCASE PROTEIN TATA"/>
    <property type="match status" value="1"/>
</dbReference>
<dbReference type="Pfam" id="PF02416">
    <property type="entry name" value="TatA_B_E"/>
    <property type="match status" value="1"/>
</dbReference>
<sequence>MGNVFSGWHLLVILLVIVLLFGTSRLPKLSKSVVEALKIFRRSFNEASDITRSQDGHPDSQGNFAESASSVPFVKSEKQSEKRASVTEAKKSK</sequence>
<keyword id="KW-1003">Cell membrane</keyword>
<keyword id="KW-0472">Membrane</keyword>
<keyword id="KW-0653">Protein transport</keyword>
<keyword id="KW-0811">Translocation</keyword>
<keyword id="KW-0812">Transmembrane</keyword>
<keyword id="KW-1133">Transmembrane helix</keyword>
<keyword id="KW-0813">Transport</keyword>
<evidence type="ECO:0000255" key="1">
    <source>
        <dbReference type="HAMAP-Rule" id="MF_00236"/>
    </source>
</evidence>
<evidence type="ECO:0000256" key="2">
    <source>
        <dbReference type="SAM" id="MobiDB-lite"/>
    </source>
</evidence>
<comment type="function">
    <text evidence="1">Part of the twin-arginine translocation (Tat) system that transports large folded proteins containing a characteristic twin-arginine motif in their signal peptide across membranes. TatA could form the protein-conducting channel of the Tat system.</text>
</comment>
<comment type="subunit">
    <text evidence="1">The Tat system comprises two distinct complexes: a TatABC complex, containing multiple copies of TatA, TatB and TatC subunits, and a separate TatA complex, containing only TatA subunits. Substrates initially bind to the TatABC complex, which probably triggers association of the separate TatA complex to form the active translocon.</text>
</comment>
<comment type="subcellular location">
    <subcellularLocation>
        <location evidence="1">Cell membrane</location>
        <topology evidence="1">Single-pass membrane protein</topology>
    </subcellularLocation>
</comment>
<comment type="similarity">
    <text evidence="1">Belongs to the TatA/E family.</text>
</comment>
<accession>Q83NJ2</accession>
<protein>
    <recommendedName>
        <fullName evidence="1">Sec-independent protein translocase protein TatA</fullName>
    </recommendedName>
</protein>
<feature type="chain" id="PRO_1000044455" description="Sec-independent protein translocase protein TatA">
    <location>
        <begin position="1"/>
        <end position="93"/>
    </location>
</feature>
<feature type="transmembrane region" description="Helical" evidence="1">
    <location>
        <begin position="1"/>
        <end position="21"/>
    </location>
</feature>
<feature type="region of interest" description="Disordered" evidence="2">
    <location>
        <begin position="49"/>
        <end position="93"/>
    </location>
</feature>
<feature type="compositionally biased region" description="Polar residues" evidence="2">
    <location>
        <begin position="60"/>
        <end position="70"/>
    </location>
</feature>
<feature type="compositionally biased region" description="Basic and acidic residues" evidence="2">
    <location>
        <begin position="75"/>
        <end position="93"/>
    </location>
</feature>